<keyword id="KW-0067">ATP-binding</keyword>
<keyword id="KW-0963">Cytoplasm</keyword>
<keyword id="KW-0227">DNA damage</keyword>
<keyword id="KW-0228">DNA excision</keyword>
<keyword id="KW-0234">DNA repair</keyword>
<keyword id="KW-0238">DNA-binding</keyword>
<keyword id="KW-0267">Excision nuclease</keyword>
<keyword id="KW-0479">Metal-binding</keyword>
<keyword id="KW-0547">Nucleotide-binding</keyword>
<keyword id="KW-0677">Repeat</keyword>
<keyword id="KW-0742">SOS response</keyword>
<keyword id="KW-0862">Zinc</keyword>
<keyword id="KW-0863">Zinc-finger</keyword>
<name>UVRA_STAES</name>
<protein>
    <recommendedName>
        <fullName evidence="1">UvrABC system protein A</fullName>
        <shortName evidence="1">UvrA protein</shortName>
    </recommendedName>
    <alternativeName>
        <fullName evidence="1">Excinuclease ABC subunit A</fullName>
    </alternativeName>
</protein>
<feature type="chain" id="PRO_0000093095" description="UvrABC system protein A">
    <location>
        <begin position="1"/>
        <end position="944"/>
    </location>
</feature>
<feature type="domain" description="ABC transporter 1" evidence="1">
    <location>
        <begin position="309"/>
        <end position="587"/>
    </location>
</feature>
<feature type="domain" description="ABC transporter 2" evidence="1">
    <location>
        <begin position="607"/>
        <end position="935"/>
    </location>
</feature>
<feature type="zinc finger region" description="C4-type" evidence="1">
    <location>
        <begin position="252"/>
        <end position="279"/>
    </location>
</feature>
<feature type="zinc finger region" description="C4-type" evidence="1">
    <location>
        <begin position="738"/>
        <end position="764"/>
    </location>
</feature>
<feature type="binding site" evidence="1">
    <location>
        <begin position="33"/>
        <end position="40"/>
    </location>
    <ligand>
        <name>ATP</name>
        <dbReference type="ChEBI" id="CHEBI:30616"/>
    </ligand>
</feature>
<feature type="binding site" evidence="1">
    <location>
        <begin position="639"/>
        <end position="646"/>
    </location>
    <ligand>
        <name>ATP</name>
        <dbReference type="ChEBI" id="CHEBI:30616"/>
    </ligand>
</feature>
<comment type="function">
    <text evidence="1">The UvrABC repair system catalyzes the recognition and processing of DNA lesions. UvrA is an ATPase and a DNA-binding protein. A damage recognition complex composed of 2 UvrA and 2 UvrB subunits scans DNA for abnormalities. When the presence of a lesion has been verified by UvrB, the UvrA molecules dissociate.</text>
</comment>
<comment type="subunit">
    <text evidence="1">Forms a heterotetramer with UvrB during the search for lesions.</text>
</comment>
<comment type="subcellular location">
    <subcellularLocation>
        <location evidence="1">Cytoplasm</location>
    </subcellularLocation>
</comment>
<comment type="similarity">
    <text evidence="1">Belongs to the ABC transporter superfamily. UvrA family.</text>
</comment>
<accession>Q8CPY9</accession>
<organism>
    <name type="scientific">Staphylococcus epidermidis (strain ATCC 12228 / FDA PCI 1200)</name>
    <dbReference type="NCBI Taxonomy" id="176280"/>
    <lineage>
        <taxon>Bacteria</taxon>
        <taxon>Bacillati</taxon>
        <taxon>Bacillota</taxon>
        <taxon>Bacilli</taxon>
        <taxon>Bacillales</taxon>
        <taxon>Staphylococcaceae</taxon>
        <taxon>Staphylococcus</taxon>
    </lineage>
</organism>
<dbReference type="EMBL" id="AE015929">
    <property type="protein sequence ID" value="AAO04139.1"/>
    <property type="molecule type" value="Genomic_DNA"/>
</dbReference>
<dbReference type="RefSeq" id="NP_764097.1">
    <property type="nucleotide sequence ID" value="NC_004461.1"/>
</dbReference>
<dbReference type="RefSeq" id="WP_002485563.1">
    <property type="nucleotide sequence ID" value="NC_004461.1"/>
</dbReference>
<dbReference type="SMR" id="Q8CPY9"/>
<dbReference type="KEGG" id="sep:SE_0542"/>
<dbReference type="PATRIC" id="fig|176280.10.peg.513"/>
<dbReference type="eggNOG" id="COG0178">
    <property type="taxonomic scope" value="Bacteria"/>
</dbReference>
<dbReference type="HOGENOM" id="CLU_001370_0_2_9"/>
<dbReference type="OrthoDB" id="9809851at2"/>
<dbReference type="Proteomes" id="UP000001411">
    <property type="component" value="Chromosome"/>
</dbReference>
<dbReference type="GO" id="GO:0005737">
    <property type="term" value="C:cytoplasm"/>
    <property type="evidence" value="ECO:0007669"/>
    <property type="project" value="UniProtKB-SubCell"/>
</dbReference>
<dbReference type="GO" id="GO:0009380">
    <property type="term" value="C:excinuclease repair complex"/>
    <property type="evidence" value="ECO:0007669"/>
    <property type="project" value="InterPro"/>
</dbReference>
<dbReference type="GO" id="GO:0005524">
    <property type="term" value="F:ATP binding"/>
    <property type="evidence" value="ECO:0007669"/>
    <property type="project" value="UniProtKB-UniRule"/>
</dbReference>
<dbReference type="GO" id="GO:0016887">
    <property type="term" value="F:ATP hydrolysis activity"/>
    <property type="evidence" value="ECO:0007669"/>
    <property type="project" value="InterPro"/>
</dbReference>
<dbReference type="GO" id="GO:0003677">
    <property type="term" value="F:DNA binding"/>
    <property type="evidence" value="ECO:0007669"/>
    <property type="project" value="UniProtKB-UniRule"/>
</dbReference>
<dbReference type="GO" id="GO:0009381">
    <property type="term" value="F:excinuclease ABC activity"/>
    <property type="evidence" value="ECO:0007669"/>
    <property type="project" value="UniProtKB-UniRule"/>
</dbReference>
<dbReference type="GO" id="GO:0008270">
    <property type="term" value="F:zinc ion binding"/>
    <property type="evidence" value="ECO:0007669"/>
    <property type="project" value="UniProtKB-UniRule"/>
</dbReference>
<dbReference type="GO" id="GO:0006289">
    <property type="term" value="P:nucleotide-excision repair"/>
    <property type="evidence" value="ECO:0007669"/>
    <property type="project" value="UniProtKB-UniRule"/>
</dbReference>
<dbReference type="GO" id="GO:0009432">
    <property type="term" value="P:SOS response"/>
    <property type="evidence" value="ECO:0007669"/>
    <property type="project" value="UniProtKB-UniRule"/>
</dbReference>
<dbReference type="CDD" id="cd03270">
    <property type="entry name" value="ABC_UvrA_I"/>
    <property type="match status" value="1"/>
</dbReference>
<dbReference type="CDD" id="cd03271">
    <property type="entry name" value="ABC_UvrA_II"/>
    <property type="match status" value="1"/>
</dbReference>
<dbReference type="FunFam" id="1.20.1580.10:FF:000002">
    <property type="entry name" value="UvrABC system protein A"/>
    <property type="match status" value="1"/>
</dbReference>
<dbReference type="FunFam" id="3.40.50.300:FF:000028">
    <property type="entry name" value="UvrABC system protein A"/>
    <property type="match status" value="1"/>
</dbReference>
<dbReference type="Gene3D" id="1.10.8.280">
    <property type="entry name" value="ABC transporter ATPase domain-like"/>
    <property type="match status" value="1"/>
</dbReference>
<dbReference type="Gene3D" id="1.20.1580.10">
    <property type="entry name" value="ABC transporter ATPase like domain"/>
    <property type="match status" value="2"/>
</dbReference>
<dbReference type="Gene3D" id="3.30.1490.20">
    <property type="entry name" value="ATP-grasp fold, A domain"/>
    <property type="match status" value="1"/>
</dbReference>
<dbReference type="Gene3D" id="3.40.50.300">
    <property type="entry name" value="P-loop containing nucleotide triphosphate hydrolases"/>
    <property type="match status" value="2"/>
</dbReference>
<dbReference type="HAMAP" id="MF_00205">
    <property type="entry name" value="UvrA"/>
    <property type="match status" value="1"/>
</dbReference>
<dbReference type="InterPro" id="IPR003439">
    <property type="entry name" value="ABC_transporter-like_ATP-bd"/>
</dbReference>
<dbReference type="InterPro" id="IPR017871">
    <property type="entry name" value="ABC_transporter-like_CS"/>
</dbReference>
<dbReference type="InterPro" id="IPR013815">
    <property type="entry name" value="ATP_grasp_subdomain_1"/>
</dbReference>
<dbReference type="InterPro" id="IPR027417">
    <property type="entry name" value="P-loop_NTPase"/>
</dbReference>
<dbReference type="InterPro" id="IPR004602">
    <property type="entry name" value="UvrA"/>
</dbReference>
<dbReference type="InterPro" id="IPR041552">
    <property type="entry name" value="UvrA_DNA-bd"/>
</dbReference>
<dbReference type="InterPro" id="IPR041102">
    <property type="entry name" value="UvrA_inter"/>
</dbReference>
<dbReference type="NCBIfam" id="NF001503">
    <property type="entry name" value="PRK00349.1"/>
    <property type="match status" value="1"/>
</dbReference>
<dbReference type="NCBIfam" id="TIGR00630">
    <property type="entry name" value="uvra"/>
    <property type="match status" value="1"/>
</dbReference>
<dbReference type="PANTHER" id="PTHR43152">
    <property type="entry name" value="UVRABC SYSTEM PROTEIN A"/>
    <property type="match status" value="1"/>
</dbReference>
<dbReference type="PANTHER" id="PTHR43152:SF3">
    <property type="entry name" value="UVRABC SYSTEM PROTEIN A"/>
    <property type="match status" value="1"/>
</dbReference>
<dbReference type="Pfam" id="PF17755">
    <property type="entry name" value="UvrA_DNA-bind"/>
    <property type="match status" value="1"/>
</dbReference>
<dbReference type="Pfam" id="PF17760">
    <property type="entry name" value="UvrA_inter"/>
    <property type="match status" value="1"/>
</dbReference>
<dbReference type="SUPFAM" id="SSF52540">
    <property type="entry name" value="P-loop containing nucleoside triphosphate hydrolases"/>
    <property type="match status" value="2"/>
</dbReference>
<dbReference type="PROSITE" id="PS00211">
    <property type="entry name" value="ABC_TRANSPORTER_1"/>
    <property type="match status" value="2"/>
</dbReference>
<dbReference type="PROSITE" id="PS50893">
    <property type="entry name" value="ABC_TRANSPORTER_2"/>
    <property type="match status" value="1"/>
</dbReference>
<gene>
    <name evidence="1" type="primary">uvrA</name>
    <name type="ordered locus">SE_0542</name>
</gene>
<sequence>MKGPSIVVKGARAHNLKGVDIELPKNKLIVMTGLSGSGKSSLAFDTIYAEGQRRYVESLSAYARQFLGQMDKPDVDTIEGLSPAISIDQKTTSKNPRSTVATVTEIYDYIRLLYARVGKPYCPYHGIEIESQTVQQMVDRILELEERTKIQLLAPVISHRKGSHEKLIEDIGKKGYVRLRVDDEIVDVNEVPQLDKNKNHTIEVVVDRLVVKDGIETRLADSIETALELAEGNLTVDVINGEELKFSENHACPICGFSIGELEPRMFSFNSPFGACPTCDGLGQKLKVDLDLVIPDKNKTLNEGAIEPWEPTSSDFYPTLLKRVCEVYKINMDKPYKKLTDRQKNILMNGSGEKEIEFTFTQRNGGTRKRKMVFEGVVPNIDRRYHESPSEYTREMMSKYMTELPCETCHGKRLSKEALSVYVGDYNIGEVVEYSIKNALYYFENLKLSDQDKSIADQILKEIISRLSFLNNVGLEYLTLDRSSGTLSGGEAQRIRLATQIGSRLTGVLYVLDEPSIGLHQRDNDRLINTLKEMRDLGNTLIVVEHDDDTMRAADYLVDVGPGAGNHGGEVVSSGTPNKVMKDKKSLTGQYLSGKKRIEVPEYRREITDRKIQIKGAKSNNLKNVNVDFPLSVLTVVTGVSGSGKSSLVNEILYKALAQKINKSKVKPGNFDEIKGIDQLDKIIDIDQSPIGRTPRSNPATYTGVFDDIRDVFAQTNEAKIRGYQKGRFSFNVKGGRCEACKGDGIIKIEMHFLPDVYVPCEVCDGKRYNRETLEVTYKGKNIADVLEMTVEEATHFFENIPKIKRKLQTLVDVGLGYITLGQQGTTLSGGEAQRVKLASELHKRSTGRSIYILDEPTTGLHVDDISRLLKVLNRIVENGDTVVIIEHNLDVIKTADHIIDLGPEGGEGGGTIIATGTPEEIAQNKGSYTGQYLKPVLERDSVE</sequence>
<reference key="1">
    <citation type="journal article" date="2003" name="Mol. Microbiol.">
        <title>Genome-based analysis of virulence genes in a non-biofilm-forming Staphylococcus epidermidis strain (ATCC 12228).</title>
        <authorList>
            <person name="Zhang Y.-Q."/>
            <person name="Ren S.-X."/>
            <person name="Li H.-L."/>
            <person name="Wang Y.-X."/>
            <person name="Fu G."/>
            <person name="Yang J."/>
            <person name="Qin Z.-Q."/>
            <person name="Miao Y.-G."/>
            <person name="Wang W.-Y."/>
            <person name="Chen R.-S."/>
            <person name="Shen Y."/>
            <person name="Chen Z."/>
            <person name="Yuan Z.-H."/>
            <person name="Zhao G.-P."/>
            <person name="Qu D."/>
            <person name="Danchin A."/>
            <person name="Wen Y.-M."/>
        </authorList>
    </citation>
    <scope>NUCLEOTIDE SEQUENCE [LARGE SCALE GENOMIC DNA]</scope>
    <source>
        <strain>ATCC 12228 / FDA PCI 1200</strain>
    </source>
</reference>
<proteinExistence type="inferred from homology"/>
<evidence type="ECO:0000255" key="1">
    <source>
        <dbReference type="HAMAP-Rule" id="MF_00205"/>
    </source>
</evidence>